<feature type="chain" id="PRO_1000092810" description="Heat-inducible transcription repressor HrcA">
    <location>
        <begin position="1"/>
        <end position="339"/>
    </location>
</feature>
<dbReference type="EMBL" id="CP000820">
    <property type="protein sequence ID" value="ABW11545.1"/>
    <property type="molecule type" value="Genomic_DNA"/>
</dbReference>
<dbReference type="RefSeq" id="WP_020459711.1">
    <property type="nucleotide sequence ID" value="NC_009921.1"/>
</dbReference>
<dbReference type="SMR" id="A8KYV9"/>
<dbReference type="STRING" id="298653.Franean1_2109"/>
<dbReference type="KEGG" id="fre:Franean1_2109"/>
<dbReference type="eggNOG" id="COG1420">
    <property type="taxonomic scope" value="Bacteria"/>
</dbReference>
<dbReference type="HOGENOM" id="CLU_050019_2_0_11"/>
<dbReference type="GO" id="GO:0003677">
    <property type="term" value="F:DNA binding"/>
    <property type="evidence" value="ECO:0007669"/>
    <property type="project" value="InterPro"/>
</dbReference>
<dbReference type="GO" id="GO:0003700">
    <property type="term" value="F:DNA-binding transcription factor activity"/>
    <property type="evidence" value="ECO:0007669"/>
    <property type="project" value="InterPro"/>
</dbReference>
<dbReference type="GO" id="GO:0045892">
    <property type="term" value="P:negative regulation of DNA-templated transcription"/>
    <property type="evidence" value="ECO:0007669"/>
    <property type="project" value="UniProtKB-UniRule"/>
</dbReference>
<dbReference type="FunFam" id="1.10.10.10:FF:000049">
    <property type="entry name" value="Heat-inducible transcription repressor HrcA"/>
    <property type="match status" value="1"/>
</dbReference>
<dbReference type="Gene3D" id="3.30.450.40">
    <property type="match status" value="1"/>
</dbReference>
<dbReference type="Gene3D" id="3.30.390.60">
    <property type="entry name" value="Heat-inducible transcription repressor hrca homolog, domain 3"/>
    <property type="match status" value="1"/>
</dbReference>
<dbReference type="Gene3D" id="1.10.10.10">
    <property type="entry name" value="Winged helix-like DNA-binding domain superfamily/Winged helix DNA-binding domain"/>
    <property type="match status" value="1"/>
</dbReference>
<dbReference type="HAMAP" id="MF_00081">
    <property type="entry name" value="HrcA"/>
    <property type="match status" value="1"/>
</dbReference>
<dbReference type="InterPro" id="IPR001034">
    <property type="entry name" value="DeoR_HTH"/>
</dbReference>
<dbReference type="InterPro" id="IPR029016">
    <property type="entry name" value="GAF-like_dom_sf"/>
</dbReference>
<dbReference type="InterPro" id="IPR002571">
    <property type="entry name" value="HrcA"/>
</dbReference>
<dbReference type="InterPro" id="IPR021153">
    <property type="entry name" value="HrcA_C"/>
</dbReference>
<dbReference type="InterPro" id="IPR036388">
    <property type="entry name" value="WH-like_DNA-bd_sf"/>
</dbReference>
<dbReference type="InterPro" id="IPR036390">
    <property type="entry name" value="WH_DNA-bd_sf"/>
</dbReference>
<dbReference type="InterPro" id="IPR023120">
    <property type="entry name" value="WHTH_transcript_rep_HrcA_IDD"/>
</dbReference>
<dbReference type="NCBIfam" id="TIGR00331">
    <property type="entry name" value="hrcA"/>
    <property type="match status" value="1"/>
</dbReference>
<dbReference type="PANTHER" id="PTHR34824">
    <property type="entry name" value="HEAT-INDUCIBLE TRANSCRIPTION REPRESSOR HRCA"/>
    <property type="match status" value="1"/>
</dbReference>
<dbReference type="PANTHER" id="PTHR34824:SF1">
    <property type="entry name" value="HEAT-INDUCIBLE TRANSCRIPTION REPRESSOR HRCA"/>
    <property type="match status" value="1"/>
</dbReference>
<dbReference type="Pfam" id="PF01628">
    <property type="entry name" value="HrcA"/>
    <property type="match status" value="1"/>
</dbReference>
<dbReference type="Pfam" id="PF08220">
    <property type="entry name" value="HTH_DeoR"/>
    <property type="match status" value="1"/>
</dbReference>
<dbReference type="PIRSF" id="PIRSF005485">
    <property type="entry name" value="HrcA"/>
    <property type="match status" value="1"/>
</dbReference>
<dbReference type="SUPFAM" id="SSF55781">
    <property type="entry name" value="GAF domain-like"/>
    <property type="match status" value="1"/>
</dbReference>
<dbReference type="SUPFAM" id="SSF46785">
    <property type="entry name" value="Winged helix' DNA-binding domain"/>
    <property type="match status" value="1"/>
</dbReference>
<keyword id="KW-0678">Repressor</keyword>
<keyword id="KW-0346">Stress response</keyword>
<keyword id="KW-0804">Transcription</keyword>
<keyword id="KW-0805">Transcription regulation</keyword>
<reference key="1">
    <citation type="journal article" date="2007" name="Genome Res.">
        <title>Genome characteristics of facultatively symbiotic Frankia sp. strains reflect host range and host plant biogeography.</title>
        <authorList>
            <person name="Normand P."/>
            <person name="Lapierre P."/>
            <person name="Tisa L.S."/>
            <person name="Gogarten J.P."/>
            <person name="Alloisio N."/>
            <person name="Bagnarol E."/>
            <person name="Bassi C.A."/>
            <person name="Berry A.M."/>
            <person name="Bickhart D.M."/>
            <person name="Choisne N."/>
            <person name="Couloux A."/>
            <person name="Cournoyer B."/>
            <person name="Cruveiller S."/>
            <person name="Daubin V."/>
            <person name="Demange N."/>
            <person name="Francino M.P."/>
            <person name="Goltsman E."/>
            <person name="Huang Y."/>
            <person name="Kopp O.R."/>
            <person name="Labarre L."/>
            <person name="Lapidus A."/>
            <person name="Lavire C."/>
            <person name="Marechal J."/>
            <person name="Martinez M."/>
            <person name="Mastronunzio J.E."/>
            <person name="Mullin B.C."/>
            <person name="Niemann J."/>
            <person name="Pujic P."/>
            <person name="Rawnsley T."/>
            <person name="Rouy Z."/>
            <person name="Schenowitz C."/>
            <person name="Sellstedt A."/>
            <person name="Tavares F."/>
            <person name="Tomkins J.P."/>
            <person name="Vallenet D."/>
            <person name="Valverde C."/>
            <person name="Wall L.G."/>
            <person name="Wang Y."/>
            <person name="Medigue C."/>
            <person name="Benson D.R."/>
        </authorList>
    </citation>
    <scope>NUCLEOTIDE SEQUENCE [LARGE SCALE GENOMIC DNA]</scope>
    <source>
        <strain>EAN1pec</strain>
    </source>
</reference>
<sequence length="339" mass="36771">MLEERRLEVLRAIVEDFVLSNEPVGSKTLAERHALGVSPATVRNDMSALEEEGYITQPHTSAGRIPTDKGYRLFVDRLSGVKPLSRAERRAIQSFLEGAVDLDDVVRRSVRLLAQLTRQVAVVQYPSLSSSSVRHIEIVTLNPNRLLLVLITDTGRVEQRVVDIPTPVDDGVVGELRGLLNGSLRGRRVVDATEVAADLPETVRPDLRPHLTTLTTVVLEALLERQEERVALAGTANLTRSSVDFADSLRFILEALEEQVVLLKLIGSARETGTVTVRIGRETDVDALRSTSVIATGYGLGPAVLGGMGVVGPMRMDYPGTMAAVRAVAKYVGELLGAD</sequence>
<evidence type="ECO:0000255" key="1">
    <source>
        <dbReference type="HAMAP-Rule" id="MF_00081"/>
    </source>
</evidence>
<proteinExistence type="inferred from homology"/>
<accession>A8KYV9</accession>
<name>HRCA_PARS2</name>
<comment type="function">
    <text evidence="1">Negative regulator of class I heat shock genes (grpE-dnaK-dnaJ and groELS operons). Prevents heat-shock induction of these operons.</text>
</comment>
<comment type="similarity">
    <text evidence="1">Belongs to the HrcA family.</text>
</comment>
<protein>
    <recommendedName>
        <fullName evidence="1">Heat-inducible transcription repressor HrcA</fullName>
    </recommendedName>
</protein>
<organism>
    <name type="scientific">Parafrankia sp. (strain EAN1pec)</name>
    <dbReference type="NCBI Taxonomy" id="298653"/>
    <lineage>
        <taxon>Bacteria</taxon>
        <taxon>Bacillati</taxon>
        <taxon>Actinomycetota</taxon>
        <taxon>Actinomycetes</taxon>
        <taxon>Frankiales</taxon>
        <taxon>Frankiaceae</taxon>
        <taxon>Parafrankia</taxon>
    </lineage>
</organism>
<gene>
    <name evidence="1" type="primary">hrcA</name>
    <name type="ordered locus">Franean1_2109</name>
</gene>